<protein>
    <recommendedName>
        <fullName evidence="1">4-hydroxy-2-oxovalerate aldolase</fullName>
        <shortName evidence="1">HOA</shortName>
        <ecNumber evidence="1">4.1.3.39</ecNumber>
    </recommendedName>
    <alternativeName>
        <fullName evidence="1">4-hydroxy-2-keto-pentanoic acid aldolase</fullName>
    </alternativeName>
    <alternativeName>
        <fullName evidence="1">4-hydroxy-2-oxopentanoate aldolase</fullName>
    </alternativeName>
</protein>
<evidence type="ECO:0000255" key="1">
    <source>
        <dbReference type="HAMAP-Rule" id="MF_01656"/>
    </source>
</evidence>
<feature type="chain" id="PRO_0000387884" description="4-hydroxy-2-oxovalerate aldolase">
    <location>
        <begin position="1"/>
        <end position="346"/>
    </location>
</feature>
<feature type="domain" description="Pyruvate carboxyltransferase" evidence="1">
    <location>
        <begin position="8"/>
        <end position="260"/>
    </location>
</feature>
<feature type="active site" description="Proton acceptor" evidence="1">
    <location>
        <position position="20"/>
    </location>
</feature>
<feature type="binding site" evidence="1">
    <location>
        <begin position="16"/>
        <end position="17"/>
    </location>
    <ligand>
        <name>substrate</name>
    </ligand>
</feature>
<feature type="binding site" evidence="1">
    <location>
        <position position="17"/>
    </location>
    <ligand>
        <name>Mn(2+)</name>
        <dbReference type="ChEBI" id="CHEBI:29035"/>
    </ligand>
</feature>
<feature type="binding site" evidence="1">
    <location>
        <position position="170"/>
    </location>
    <ligand>
        <name>substrate</name>
    </ligand>
</feature>
<feature type="binding site" evidence="1">
    <location>
        <position position="199"/>
    </location>
    <ligand>
        <name>Mn(2+)</name>
        <dbReference type="ChEBI" id="CHEBI:29035"/>
    </ligand>
</feature>
<feature type="binding site" evidence="1">
    <location>
        <position position="199"/>
    </location>
    <ligand>
        <name>substrate</name>
    </ligand>
</feature>
<feature type="binding site" evidence="1">
    <location>
        <position position="201"/>
    </location>
    <ligand>
        <name>Mn(2+)</name>
        <dbReference type="ChEBI" id="CHEBI:29035"/>
    </ligand>
</feature>
<feature type="binding site" evidence="1">
    <location>
        <position position="290"/>
    </location>
    <ligand>
        <name>substrate</name>
    </ligand>
</feature>
<feature type="site" description="Transition state stabilizer" evidence="1">
    <location>
        <position position="16"/>
    </location>
</feature>
<name>HOA_STUST</name>
<proteinExistence type="inferred from homology"/>
<accession>Q9ZI56</accession>
<dbReference type="EC" id="4.1.3.39" evidence="1"/>
<dbReference type="EMBL" id="AF039534">
    <property type="protein sequence ID" value="AAD02153.1"/>
    <property type="molecule type" value="Genomic_DNA"/>
</dbReference>
<dbReference type="SMR" id="Q9ZI56"/>
<dbReference type="OrthoDB" id="9803573at2"/>
<dbReference type="GO" id="GO:0003852">
    <property type="term" value="F:2-isopropylmalate synthase activity"/>
    <property type="evidence" value="ECO:0007669"/>
    <property type="project" value="TreeGrafter"/>
</dbReference>
<dbReference type="GO" id="GO:0008701">
    <property type="term" value="F:4-hydroxy-2-oxovalerate aldolase activity"/>
    <property type="evidence" value="ECO:0007669"/>
    <property type="project" value="UniProtKB-UniRule"/>
</dbReference>
<dbReference type="GO" id="GO:0030145">
    <property type="term" value="F:manganese ion binding"/>
    <property type="evidence" value="ECO:0007669"/>
    <property type="project" value="UniProtKB-UniRule"/>
</dbReference>
<dbReference type="GO" id="GO:0009056">
    <property type="term" value="P:catabolic process"/>
    <property type="evidence" value="ECO:0007669"/>
    <property type="project" value="UniProtKB-KW"/>
</dbReference>
<dbReference type="GO" id="GO:0009098">
    <property type="term" value="P:L-leucine biosynthetic process"/>
    <property type="evidence" value="ECO:0007669"/>
    <property type="project" value="TreeGrafter"/>
</dbReference>
<dbReference type="CDD" id="cd07943">
    <property type="entry name" value="DRE_TIM_HOA"/>
    <property type="match status" value="1"/>
</dbReference>
<dbReference type="Gene3D" id="1.10.8.60">
    <property type="match status" value="1"/>
</dbReference>
<dbReference type="Gene3D" id="3.20.20.70">
    <property type="entry name" value="Aldolase class I"/>
    <property type="match status" value="1"/>
</dbReference>
<dbReference type="HAMAP" id="MF_01656">
    <property type="entry name" value="HOA"/>
    <property type="match status" value="1"/>
</dbReference>
<dbReference type="InterPro" id="IPR050073">
    <property type="entry name" value="2-IPM_HCS-like"/>
</dbReference>
<dbReference type="InterPro" id="IPR017629">
    <property type="entry name" value="4OH_2_O-val_aldolase"/>
</dbReference>
<dbReference type="InterPro" id="IPR013785">
    <property type="entry name" value="Aldolase_TIM"/>
</dbReference>
<dbReference type="InterPro" id="IPR012425">
    <property type="entry name" value="DmpG_comm"/>
</dbReference>
<dbReference type="InterPro" id="IPR035685">
    <property type="entry name" value="DRE_TIM_HOA"/>
</dbReference>
<dbReference type="InterPro" id="IPR000891">
    <property type="entry name" value="PYR_CT"/>
</dbReference>
<dbReference type="NCBIfam" id="TIGR03217">
    <property type="entry name" value="4OH_2_O_val_ald"/>
    <property type="match status" value="1"/>
</dbReference>
<dbReference type="NCBIfam" id="NF006049">
    <property type="entry name" value="PRK08195.1"/>
    <property type="match status" value="1"/>
</dbReference>
<dbReference type="PANTHER" id="PTHR10277:SF9">
    <property type="entry name" value="2-ISOPROPYLMALATE SYNTHASE 1, CHLOROPLASTIC-RELATED"/>
    <property type="match status" value="1"/>
</dbReference>
<dbReference type="PANTHER" id="PTHR10277">
    <property type="entry name" value="HOMOCITRATE SYNTHASE-RELATED"/>
    <property type="match status" value="1"/>
</dbReference>
<dbReference type="Pfam" id="PF07836">
    <property type="entry name" value="DmpG_comm"/>
    <property type="match status" value="1"/>
</dbReference>
<dbReference type="Pfam" id="PF00682">
    <property type="entry name" value="HMGL-like"/>
    <property type="match status" value="1"/>
</dbReference>
<dbReference type="SUPFAM" id="SSF51569">
    <property type="entry name" value="Aldolase"/>
    <property type="match status" value="1"/>
</dbReference>
<dbReference type="SUPFAM" id="SSF89000">
    <property type="entry name" value="post-HMGL domain-like"/>
    <property type="match status" value="1"/>
</dbReference>
<dbReference type="PROSITE" id="PS50991">
    <property type="entry name" value="PYR_CT"/>
    <property type="match status" value="1"/>
</dbReference>
<sequence>MNLQGKNVTLHDMSLRDGMHAKRHQISLEQMIAVATGLDAAGMPLIEITHGDGLGGRSINYGFPAHSDEEYLRAVIPRLKQAKVSALLLPGIGTVDHLKMALDCGVSTIRVATHCTEADVSEQHIGMSRKLGADTVGFLMMAHMISAEKVLEQARLMESYGANCIYCTDSAGYMLPDEVSEKIGLLRAELNPATEIGFHGHHNMGMAIANSLAAIEAGASRIDGSVAGLGAGAGNTPLEVFVAVCKRMGVETGIDLYKIMDVAEDIVVPMMDQPIRVDRDALTLGYAGVYSSFLLFAQRAEKKYGVPARDILVELGRRGTVGGQEDMIEDLALDMSRARQNQKVSA</sequence>
<keyword id="KW-0058">Aromatic hydrocarbons catabolism</keyword>
<keyword id="KW-0456">Lyase</keyword>
<keyword id="KW-0464">Manganese</keyword>
<keyword id="KW-0479">Metal-binding</keyword>
<comment type="catalytic activity">
    <reaction evidence="1">
        <text>(S)-4-hydroxy-2-oxopentanoate = acetaldehyde + pyruvate</text>
        <dbReference type="Rhea" id="RHEA:22624"/>
        <dbReference type="ChEBI" id="CHEBI:15343"/>
        <dbReference type="ChEBI" id="CHEBI:15361"/>
        <dbReference type="ChEBI" id="CHEBI:73143"/>
        <dbReference type="EC" id="4.1.3.39"/>
    </reaction>
</comment>
<comment type="similarity">
    <text evidence="1">Belongs to the 4-hydroxy-2-oxovalerate aldolase family.</text>
</comment>
<reference key="1">
    <citation type="journal article" date="2000" name="Gene">
        <title>Complete nucleotide sequence and evolutionary significance of a chromosomally encoded naphthalene-degradation lower pathway from Pseudomonas stutzeri AN10.</title>
        <authorList>
            <person name="Bosch R."/>
            <person name="Garcia-Valdes E."/>
            <person name="Moore E.R.B."/>
        </authorList>
    </citation>
    <scope>NUCLEOTIDE SEQUENCE [GENOMIC DNA]</scope>
    <source>
        <strain>AN10</strain>
    </source>
</reference>
<gene>
    <name type="primary">nahM</name>
</gene>
<organism>
    <name type="scientific">Stutzerimonas stutzeri</name>
    <name type="common">Pseudomonas stutzeri</name>
    <dbReference type="NCBI Taxonomy" id="316"/>
    <lineage>
        <taxon>Bacteria</taxon>
        <taxon>Pseudomonadati</taxon>
        <taxon>Pseudomonadota</taxon>
        <taxon>Gammaproteobacteria</taxon>
        <taxon>Pseudomonadales</taxon>
        <taxon>Pseudomonadaceae</taxon>
        <taxon>Stutzerimonas</taxon>
    </lineage>
</organism>